<proteinExistence type="inferred from homology"/>
<name>RS14Z_FRACC</name>
<keyword id="KW-0479">Metal-binding</keyword>
<keyword id="KW-1185">Reference proteome</keyword>
<keyword id="KW-0687">Ribonucleoprotein</keyword>
<keyword id="KW-0689">Ribosomal protein</keyword>
<keyword id="KW-0694">RNA-binding</keyword>
<keyword id="KW-0699">rRNA-binding</keyword>
<keyword id="KW-0862">Zinc</keyword>
<feature type="chain" id="PRO_0000269101" description="Small ribosomal subunit protein uS14">
    <location>
        <begin position="1"/>
        <end position="61"/>
    </location>
</feature>
<feature type="binding site" evidence="1">
    <location>
        <position position="24"/>
    </location>
    <ligand>
        <name>Zn(2+)</name>
        <dbReference type="ChEBI" id="CHEBI:29105"/>
    </ligand>
</feature>
<feature type="binding site" evidence="1">
    <location>
        <position position="27"/>
    </location>
    <ligand>
        <name>Zn(2+)</name>
        <dbReference type="ChEBI" id="CHEBI:29105"/>
    </ligand>
</feature>
<feature type="binding site" evidence="1">
    <location>
        <position position="40"/>
    </location>
    <ligand>
        <name>Zn(2+)</name>
        <dbReference type="ChEBI" id="CHEBI:29105"/>
    </ligand>
</feature>
<feature type="binding site" evidence="1">
    <location>
        <position position="43"/>
    </location>
    <ligand>
        <name>Zn(2+)</name>
        <dbReference type="ChEBI" id="CHEBI:29105"/>
    </ligand>
</feature>
<accession>Q2JFG3</accession>
<protein>
    <recommendedName>
        <fullName evidence="1">Small ribosomal subunit protein uS14</fullName>
    </recommendedName>
    <alternativeName>
        <fullName evidence="2">30S ribosomal protein S14 type Z</fullName>
    </alternativeName>
</protein>
<sequence>MAKKALIEKSNRKPKYAVRGYTRCQRCGRSRSVYRGFGLCRVCLRQMAHRGELPGVTKSSW</sequence>
<dbReference type="EMBL" id="CP000249">
    <property type="protein sequence ID" value="ABD09979.1"/>
    <property type="molecule type" value="Genomic_DNA"/>
</dbReference>
<dbReference type="RefSeq" id="WP_011435050.1">
    <property type="nucleotide sequence ID" value="NZ_MSEA01000047.1"/>
</dbReference>
<dbReference type="SMR" id="Q2JFG3"/>
<dbReference type="STRING" id="106370.Francci3_0595"/>
<dbReference type="KEGG" id="fra:Francci3_0595"/>
<dbReference type="eggNOG" id="COG0199">
    <property type="taxonomic scope" value="Bacteria"/>
</dbReference>
<dbReference type="HOGENOM" id="CLU_139869_3_0_11"/>
<dbReference type="OrthoDB" id="9810484at2"/>
<dbReference type="PhylomeDB" id="Q2JFG3"/>
<dbReference type="Proteomes" id="UP000001937">
    <property type="component" value="Chromosome"/>
</dbReference>
<dbReference type="GO" id="GO:0005737">
    <property type="term" value="C:cytoplasm"/>
    <property type="evidence" value="ECO:0007669"/>
    <property type="project" value="UniProtKB-ARBA"/>
</dbReference>
<dbReference type="GO" id="GO:0015935">
    <property type="term" value="C:small ribosomal subunit"/>
    <property type="evidence" value="ECO:0007669"/>
    <property type="project" value="TreeGrafter"/>
</dbReference>
<dbReference type="GO" id="GO:0019843">
    <property type="term" value="F:rRNA binding"/>
    <property type="evidence" value="ECO:0007669"/>
    <property type="project" value="UniProtKB-UniRule"/>
</dbReference>
<dbReference type="GO" id="GO:0003735">
    <property type="term" value="F:structural constituent of ribosome"/>
    <property type="evidence" value="ECO:0007669"/>
    <property type="project" value="InterPro"/>
</dbReference>
<dbReference type="GO" id="GO:0008270">
    <property type="term" value="F:zinc ion binding"/>
    <property type="evidence" value="ECO:0007669"/>
    <property type="project" value="UniProtKB-UniRule"/>
</dbReference>
<dbReference type="GO" id="GO:0006412">
    <property type="term" value="P:translation"/>
    <property type="evidence" value="ECO:0007669"/>
    <property type="project" value="UniProtKB-UniRule"/>
</dbReference>
<dbReference type="FunFam" id="4.10.830.10:FF:000001">
    <property type="entry name" value="30S ribosomal protein S14 type Z"/>
    <property type="match status" value="1"/>
</dbReference>
<dbReference type="Gene3D" id="4.10.830.10">
    <property type="entry name" value="30s Ribosomal Protein S14, Chain N"/>
    <property type="match status" value="1"/>
</dbReference>
<dbReference type="HAMAP" id="MF_01364_B">
    <property type="entry name" value="Ribosomal_uS14_2_B"/>
    <property type="match status" value="1"/>
</dbReference>
<dbReference type="InterPro" id="IPR001209">
    <property type="entry name" value="Ribosomal_uS14"/>
</dbReference>
<dbReference type="InterPro" id="IPR023053">
    <property type="entry name" value="Ribosomal_uS14_bact"/>
</dbReference>
<dbReference type="InterPro" id="IPR018271">
    <property type="entry name" value="Ribosomal_uS14_CS"/>
</dbReference>
<dbReference type="InterPro" id="IPR043140">
    <property type="entry name" value="Ribosomal_uS14_sf"/>
</dbReference>
<dbReference type="NCBIfam" id="NF005974">
    <property type="entry name" value="PRK08061.1"/>
    <property type="match status" value="1"/>
</dbReference>
<dbReference type="PANTHER" id="PTHR19836">
    <property type="entry name" value="30S RIBOSOMAL PROTEIN S14"/>
    <property type="match status" value="1"/>
</dbReference>
<dbReference type="PANTHER" id="PTHR19836:SF19">
    <property type="entry name" value="SMALL RIBOSOMAL SUBUNIT PROTEIN US14M"/>
    <property type="match status" value="1"/>
</dbReference>
<dbReference type="Pfam" id="PF00253">
    <property type="entry name" value="Ribosomal_S14"/>
    <property type="match status" value="1"/>
</dbReference>
<dbReference type="SUPFAM" id="SSF57716">
    <property type="entry name" value="Glucocorticoid receptor-like (DNA-binding domain)"/>
    <property type="match status" value="1"/>
</dbReference>
<dbReference type="PROSITE" id="PS00527">
    <property type="entry name" value="RIBOSOMAL_S14"/>
    <property type="match status" value="1"/>
</dbReference>
<comment type="function">
    <text evidence="1">Binds 16S rRNA, required for the assembly of 30S particles and may also be responsible for determining the conformation of the 16S rRNA at the A site.</text>
</comment>
<comment type="cofactor">
    <cofactor evidence="1">
        <name>Zn(2+)</name>
        <dbReference type="ChEBI" id="CHEBI:29105"/>
    </cofactor>
    <text evidence="1">Binds 1 zinc ion per subunit.</text>
</comment>
<comment type="subunit">
    <text evidence="1">Part of the 30S ribosomal subunit. Contacts proteins S3 and S10.</text>
</comment>
<comment type="similarity">
    <text evidence="1">Belongs to the universal ribosomal protein uS14 family. Zinc-binding uS14 subfamily.</text>
</comment>
<reference key="1">
    <citation type="journal article" date="2007" name="Genome Res.">
        <title>Genome characteristics of facultatively symbiotic Frankia sp. strains reflect host range and host plant biogeography.</title>
        <authorList>
            <person name="Normand P."/>
            <person name="Lapierre P."/>
            <person name="Tisa L.S."/>
            <person name="Gogarten J.P."/>
            <person name="Alloisio N."/>
            <person name="Bagnarol E."/>
            <person name="Bassi C.A."/>
            <person name="Berry A.M."/>
            <person name="Bickhart D.M."/>
            <person name="Choisne N."/>
            <person name="Couloux A."/>
            <person name="Cournoyer B."/>
            <person name="Cruveiller S."/>
            <person name="Daubin V."/>
            <person name="Demange N."/>
            <person name="Francino M.P."/>
            <person name="Goltsman E."/>
            <person name="Huang Y."/>
            <person name="Kopp O.R."/>
            <person name="Labarre L."/>
            <person name="Lapidus A."/>
            <person name="Lavire C."/>
            <person name="Marechal J."/>
            <person name="Martinez M."/>
            <person name="Mastronunzio J.E."/>
            <person name="Mullin B.C."/>
            <person name="Niemann J."/>
            <person name="Pujic P."/>
            <person name="Rawnsley T."/>
            <person name="Rouy Z."/>
            <person name="Schenowitz C."/>
            <person name="Sellstedt A."/>
            <person name="Tavares F."/>
            <person name="Tomkins J.P."/>
            <person name="Vallenet D."/>
            <person name="Valverde C."/>
            <person name="Wall L.G."/>
            <person name="Wang Y."/>
            <person name="Medigue C."/>
            <person name="Benson D.R."/>
        </authorList>
    </citation>
    <scope>NUCLEOTIDE SEQUENCE [LARGE SCALE GENOMIC DNA]</scope>
    <source>
        <strain>DSM 45818 / CECT 9043 / HFP020203 / CcI3</strain>
    </source>
</reference>
<evidence type="ECO:0000255" key="1">
    <source>
        <dbReference type="HAMAP-Rule" id="MF_01364"/>
    </source>
</evidence>
<evidence type="ECO:0000305" key="2"/>
<organism>
    <name type="scientific">Frankia casuarinae (strain DSM 45818 / CECT 9043 / HFP020203 / CcI3)</name>
    <dbReference type="NCBI Taxonomy" id="106370"/>
    <lineage>
        <taxon>Bacteria</taxon>
        <taxon>Bacillati</taxon>
        <taxon>Actinomycetota</taxon>
        <taxon>Actinomycetes</taxon>
        <taxon>Frankiales</taxon>
        <taxon>Frankiaceae</taxon>
        <taxon>Frankia</taxon>
    </lineage>
</organism>
<gene>
    <name evidence="1" type="primary">rpsZ</name>
    <name evidence="1" type="synonym">rpsN</name>
    <name type="ordered locus">Francci3_0595</name>
</gene>